<evidence type="ECO:0000255" key="1"/>
<proteinExistence type="inferred from homology"/>
<protein>
    <recommendedName>
        <fullName>Uncharacterized protein PM1083</fullName>
    </recommendedName>
</protein>
<accession>Q9CLW6</accession>
<feature type="signal peptide" evidence="1">
    <location>
        <begin position="1"/>
        <end position="25"/>
    </location>
</feature>
<feature type="chain" id="PRO_0000014180" description="Uncharacterized protein PM1083">
    <location>
        <begin position="26"/>
        <end position="153"/>
    </location>
</feature>
<reference key="1">
    <citation type="journal article" date="2001" name="Proc. Natl. Acad. Sci. U.S.A.">
        <title>Complete genomic sequence of Pasteurella multocida Pm70.</title>
        <authorList>
            <person name="May B.J."/>
            <person name="Zhang Q."/>
            <person name="Li L.L."/>
            <person name="Paustian M.L."/>
            <person name="Whittam T.S."/>
            <person name="Kapur V."/>
        </authorList>
    </citation>
    <scope>NUCLEOTIDE SEQUENCE [LARGE SCALE GENOMIC DNA]</scope>
    <source>
        <strain>Pm70</strain>
    </source>
</reference>
<organism>
    <name type="scientific">Pasteurella multocida (strain Pm70)</name>
    <dbReference type="NCBI Taxonomy" id="272843"/>
    <lineage>
        <taxon>Bacteria</taxon>
        <taxon>Pseudomonadati</taxon>
        <taxon>Pseudomonadota</taxon>
        <taxon>Gammaproteobacteria</taxon>
        <taxon>Pasteurellales</taxon>
        <taxon>Pasteurellaceae</taxon>
        <taxon>Pasteurella</taxon>
    </lineage>
</organism>
<sequence>MKKRQYLKSLYVALLGTLCYLSVNAQSQLFTPEQMSKIENKLIGEHKFALQWISWDKFGTAEISRDATGLVIKGEQELDGNSVSLFGRIKVIDESAFLFTGEIVTIVYHVNKGKACTRHGTYEFRATDKRKYWRLQQMDSPCDSVVDYIDIFF</sequence>
<keyword id="KW-1185">Reference proteome</keyword>
<keyword id="KW-0732">Signal</keyword>
<gene>
    <name type="ordered locus">PM1083</name>
</gene>
<name>Y1083_PASMU</name>
<dbReference type="EMBL" id="AE004439">
    <property type="protein sequence ID" value="AAK03167.1"/>
    <property type="molecule type" value="Genomic_DNA"/>
</dbReference>
<dbReference type="RefSeq" id="WP_010907010.1">
    <property type="nucleotide sequence ID" value="NC_002663.1"/>
</dbReference>
<dbReference type="SMR" id="Q9CLW6"/>
<dbReference type="STRING" id="272843.PM1083"/>
<dbReference type="EnsemblBacteria" id="AAK03167">
    <property type="protein sequence ID" value="AAK03167"/>
    <property type="gene ID" value="PM1083"/>
</dbReference>
<dbReference type="KEGG" id="pmu:PM1083"/>
<dbReference type="PATRIC" id="fig|272843.6.peg.1097"/>
<dbReference type="HOGENOM" id="CLU_139022_0_0_6"/>
<dbReference type="OrthoDB" id="5684986at2"/>
<dbReference type="Proteomes" id="UP000000809">
    <property type="component" value="Chromosome"/>
</dbReference>